<comment type="function">
    <text evidence="1">One of the primary rRNA binding proteins, it binds directly to 16S rRNA central domain where it helps coordinate assembly of the platform of the 30S subunit.</text>
</comment>
<comment type="subunit">
    <text evidence="1">Part of the 30S ribosomal subunit.</text>
</comment>
<comment type="similarity">
    <text evidence="1">Belongs to the universal ribosomal protein uS8 family.</text>
</comment>
<keyword id="KW-0002">3D-structure</keyword>
<keyword id="KW-0687">Ribonucleoprotein</keyword>
<keyword id="KW-0689">Ribosomal protein</keyword>
<keyword id="KW-0694">RNA-binding</keyword>
<keyword id="KW-0699">rRNA-binding</keyword>
<accession>Q9V1V0</accession>
<accession>G8ZHW0</accession>
<name>RS8_PYRAB</name>
<gene>
    <name evidence="1" type="primary">rps8</name>
    <name type="ordered locus">PYRAB03260</name>
    <name type="ORF">PAB2131</name>
</gene>
<protein>
    <recommendedName>
        <fullName evidence="1">Small ribosomal subunit protein uS8</fullName>
    </recommendedName>
    <alternativeName>
        <fullName evidence="2">30S ribosomal protein S8</fullName>
    </alternativeName>
</protein>
<reference key="1">
    <citation type="journal article" date="2003" name="Mol. Microbiol.">
        <title>An integrated analysis of the genome of the hyperthermophilic archaeon Pyrococcus abyssi.</title>
        <authorList>
            <person name="Cohen G.N."/>
            <person name="Barbe V."/>
            <person name="Flament D."/>
            <person name="Galperin M."/>
            <person name="Heilig R."/>
            <person name="Lecompte O."/>
            <person name="Poch O."/>
            <person name="Prieur D."/>
            <person name="Querellou J."/>
            <person name="Ripp R."/>
            <person name="Thierry J.-C."/>
            <person name="Van der Oost J."/>
            <person name="Weissenbach J."/>
            <person name="Zivanovic Y."/>
            <person name="Forterre P."/>
        </authorList>
    </citation>
    <scope>NUCLEOTIDE SEQUENCE [LARGE SCALE GENOMIC DNA]</scope>
    <source>
        <strain>GE5 / Orsay</strain>
    </source>
</reference>
<reference key="2">
    <citation type="journal article" date="2012" name="Curr. Microbiol.">
        <title>Re-annotation of two hyperthermophilic archaea Pyrococcus abyssi GE5 and Pyrococcus furiosus DSM 3638.</title>
        <authorList>
            <person name="Gao J."/>
            <person name="Wang J."/>
        </authorList>
    </citation>
    <scope>GENOME REANNOTATION</scope>
    <source>
        <strain>GE5 / Orsay</strain>
    </source>
</reference>
<feature type="chain" id="PRO_0000126547" description="Small ribosomal subunit protein uS8">
    <location>
        <begin position="1"/>
        <end position="130"/>
    </location>
</feature>
<feature type="helix" evidence="4">
    <location>
        <begin position="6"/>
        <end position="19"/>
    </location>
</feature>
<feature type="strand" evidence="4">
    <location>
        <begin position="23"/>
        <end position="29"/>
    </location>
</feature>
<feature type="helix" evidence="4">
    <location>
        <begin position="32"/>
        <end position="43"/>
    </location>
</feature>
<feature type="strand" evidence="4">
    <location>
        <begin position="50"/>
        <end position="53"/>
    </location>
</feature>
<feature type="strand" evidence="4">
    <location>
        <begin position="56"/>
        <end position="58"/>
    </location>
</feature>
<feature type="strand" evidence="4">
    <location>
        <begin position="60"/>
        <end position="64"/>
    </location>
</feature>
<feature type="strand" evidence="4">
    <location>
        <begin position="70"/>
        <end position="74"/>
    </location>
</feature>
<feature type="helix" evidence="4">
    <location>
        <begin position="86"/>
        <end position="93"/>
    </location>
</feature>
<feature type="strand" evidence="3">
    <location>
        <begin position="94"/>
        <end position="96"/>
    </location>
</feature>
<feature type="strand" evidence="4">
    <location>
        <begin position="100"/>
        <end position="106"/>
    </location>
</feature>
<feature type="strand" evidence="4">
    <location>
        <begin position="109"/>
        <end position="112"/>
    </location>
</feature>
<feature type="helix" evidence="4">
    <location>
        <begin position="113"/>
        <end position="119"/>
    </location>
</feature>
<feature type="strand" evidence="4">
    <location>
        <begin position="123"/>
        <end position="130"/>
    </location>
</feature>
<organism>
    <name type="scientific">Pyrococcus abyssi (strain GE5 / Orsay)</name>
    <dbReference type="NCBI Taxonomy" id="272844"/>
    <lineage>
        <taxon>Archaea</taxon>
        <taxon>Methanobacteriati</taxon>
        <taxon>Methanobacteriota</taxon>
        <taxon>Thermococci</taxon>
        <taxon>Thermococcales</taxon>
        <taxon>Thermococcaceae</taxon>
        <taxon>Pyrococcus</taxon>
    </lineage>
</organism>
<evidence type="ECO:0000255" key="1">
    <source>
        <dbReference type="HAMAP-Rule" id="MF_01302"/>
    </source>
</evidence>
<evidence type="ECO:0000305" key="2"/>
<evidence type="ECO:0007829" key="3">
    <source>
        <dbReference type="PDB" id="6SWD"/>
    </source>
</evidence>
<evidence type="ECO:0007829" key="4">
    <source>
        <dbReference type="PDB" id="7ZHG"/>
    </source>
</evidence>
<dbReference type="EMBL" id="AJ248284">
    <property type="protein sequence ID" value="CAB49248.1"/>
    <property type="molecule type" value="Genomic_DNA"/>
</dbReference>
<dbReference type="EMBL" id="HE613800">
    <property type="protein sequence ID" value="CCE69703.1"/>
    <property type="molecule type" value="Genomic_DNA"/>
</dbReference>
<dbReference type="PIR" id="A75146">
    <property type="entry name" value="A75146"/>
</dbReference>
<dbReference type="RefSeq" id="WP_010867448.1">
    <property type="nucleotide sequence ID" value="NC_000868.1"/>
</dbReference>
<dbReference type="PDB" id="6SW9">
    <property type="method" value="EM"/>
    <property type="resolution" value="4.20 A"/>
    <property type="chains" value="I=1-130"/>
</dbReference>
<dbReference type="PDB" id="6SWC">
    <property type="method" value="EM"/>
    <property type="resolution" value="3.30 A"/>
    <property type="chains" value="I=1-130"/>
</dbReference>
<dbReference type="PDB" id="6SWD">
    <property type="method" value="EM"/>
    <property type="resolution" value="3.20 A"/>
    <property type="chains" value="I=1-130"/>
</dbReference>
<dbReference type="PDB" id="7ZAG">
    <property type="method" value="EM"/>
    <property type="resolution" value="2.77 A"/>
    <property type="chains" value="I=1-130"/>
</dbReference>
<dbReference type="PDB" id="7ZAH">
    <property type="method" value="EM"/>
    <property type="resolution" value="2.70 A"/>
    <property type="chains" value="I=1-130"/>
</dbReference>
<dbReference type="PDB" id="7ZAI">
    <property type="method" value="EM"/>
    <property type="resolution" value="2.60 A"/>
    <property type="chains" value="I=1-130"/>
</dbReference>
<dbReference type="PDB" id="7ZHG">
    <property type="method" value="EM"/>
    <property type="resolution" value="2.25 A"/>
    <property type="chains" value="I=1-130"/>
</dbReference>
<dbReference type="PDBsum" id="6SW9"/>
<dbReference type="PDBsum" id="6SWC"/>
<dbReference type="PDBsum" id="6SWD"/>
<dbReference type="PDBsum" id="7ZAG"/>
<dbReference type="PDBsum" id="7ZAH"/>
<dbReference type="PDBsum" id="7ZAI"/>
<dbReference type="PDBsum" id="7ZHG"/>
<dbReference type="EMDB" id="EMD-10320"/>
<dbReference type="EMDB" id="EMD-10322"/>
<dbReference type="EMDB" id="EMD-10323"/>
<dbReference type="EMDB" id="EMD-14579"/>
<dbReference type="EMDB" id="EMD-14580"/>
<dbReference type="EMDB" id="EMD-14581"/>
<dbReference type="EMDB" id="EMD-14731"/>
<dbReference type="EMDB" id="EMD-8148"/>
<dbReference type="SMR" id="Q9V1V0"/>
<dbReference type="STRING" id="272844.PAB2131"/>
<dbReference type="KEGG" id="pab:PAB2131"/>
<dbReference type="PATRIC" id="fig|272844.11.peg.347"/>
<dbReference type="eggNOG" id="arCOG04091">
    <property type="taxonomic scope" value="Archaea"/>
</dbReference>
<dbReference type="HOGENOM" id="CLU_098428_1_1_2"/>
<dbReference type="OrthoDB" id="5670at2157"/>
<dbReference type="PhylomeDB" id="Q9V1V0"/>
<dbReference type="Proteomes" id="UP000000810">
    <property type="component" value="Chromosome"/>
</dbReference>
<dbReference type="Proteomes" id="UP000009139">
    <property type="component" value="Chromosome"/>
</dbReference>
<dbReference type="GO" id="GO:1990904">
    <property type="term" value="C:ribonucleoprotein complex"/>
    <property type="evidence" value="ECO:0007669"/>
    <property type="project" value="UniProtKB-KW"/>
</dbReference>
<dbReference type="GO" id="GO:0005840">
    <property type="term" value="C:ribosome"/>
    <property type="evidence" value="ECO:0007669"/>
    <property type="project" value="UniProtKB-KW"/>
</dbReference>
<dbReference type="GO" id="GO:0019843">
    <property type="term" value="F:rRNA binding"/>
    <property type="evidence" value="ECO:0007669"/>
    <property type="project" value="UniProtKB-UniRule"/>
</dbReference>
<dbReference type="GO" id="GO:0003735">
    <property type="term" value="F:structural constituent of ribosome"/>
    <property type="evidence" value="ECO:0007669"/>
    <property type="project" value="InterPro"/>
</dbReference>
<dbReference type="GO" id="GO:0006412">
    <property type="term" value="P:translation"/>
    <property type="evidence" value="ECO:0007669"/>
    <property type="project" value="UniProtKB-UniRule"/>
</dbReference>
<dbReference type="FunFam" id="3.30.1370.30:FF:000001">
    <property type="entry name" value="40S ribosomal protein S15a"/>
    <property type="match status" value="1"/>
</dbReference>
<dbReference type="FunFam" id="3.30.1490.10:FF:000002">
    <property type="entry name" value="40S ribosomal protein S15a"/>
    <property type="match status" value="1"/>
</dbReference>
<dbReference type="Gene3D" id="3.30.1370.30">
    <property type="match status" value="1"/>
</dbReference>
<dbReference type="Gene3D" id="3.30.1490.10">
    <property type="match status" value="1"/>
</dbReference>
<dbReference type="HAMAP" id="MF_01302_A">
    <property type="entry name" value="Ribosomal_uS8_A"/>
    <property type="match status" value="1"/>
</dbReference>
<dbReference type="InterPro" id="IPR000630">
    <property type="entry name" value="Ribosomal_uS8"/>
</dbReference>
<dbReference type="InterPro" id="IPR047863">
    <property type="entry name" value="Ribosomal_uS8_CS"/>
</dbReference>
<dbReference type="InterPro" id="IPR035987">
    <property type="entry name" value="Ribosomal_uS8_sf"/>
</dbReference>
<dbReference type="NCBIfam" id="NF003115">
    <property type="entry name" value="PRK04034.1"/>
    <property type="match status" value="1"/>
</dbReference>
<dbReference type="PANTHER" id="PTHR11758">
    <property type="entry name" value="40S RIBOSOMAL PROTEIN S15A"/>
    <property type="match status" value="1"/>
</dbReference>
<dbReference type="Pfam" id="PF00410">
    <property type="entry name" value="Ribosomal_S8"/>
    <property type="match status" value="1"/>
</dbReference>
<dbReference type="SUPFAM" id="SSF56047">
    <property type="entry name" value="Ribosomal protein S8"/>
    <property type="match status" value="1"/>
</dbReference>
<dbReference type="PROSITE" id="PS00053">
    <property type="entry name" value="RIBOSOMAL_S8"/>
    <property type="match status" value="1"/>
</dbReference>
<sequence length="130" mass="14748">MTLLDPLANALSHITNSERVGKREVYIKPASKLIGEVLRVMQKYGYIGEFEFIDDGRAGVYRVQLLGKINKAGAIKPRFPVKARDYERWEKRFLPAFEFGILIVSTSQGVMSHKEAREKGIGGRLIAYVY</sequence>
<proteinExistence type="evidence at protein level"/>